<organism>
    <name type="scientific">Rattus norvegicus</name>
    <name type="common">Rat</name>
    <dbReference type="NCBI Taxonomy" id="10116"/>
    <lineage>
        <taxon>Eukaryota</taxon>
        <taxon>Metazoa</taxon>
        <taxon>Chordata</taxon>
        <taxon>Craniata</taxon>
        <taxon>Vertebrata</taxon>
        <taxon>Euteleostomi</taxon>
        <taxon>Mammalia</taxon>
        <taxon>Eutheria</taxon>
        <taxon>Euarchontoglires</taxon>
        <taxon>Glires</taxon>
        <taxon>Rodentia</taxon>
        <taxon>Myomorpha</taxon>
        <taxon>Muroidea</taxon>
        <taxon>Muridae</taxon>
        <taxon>Murinae</taxon>
        <taxon>Rattus</taxon>
    </lineage>
</organism>
<proteinExistence type="evidence at protein level"/>
<dbReference type="EMBL" id="AB024930">
    <property type="protein sequence ID" value="BAA88955.1"/>
    <property type="molecule type" value="mRNA"/>
</dbReference>
<dbReference type="RefSeq" id="NP_071522.1">
    <property type="nucleotide sequence ID" value="NM_022186.1"/>
</dbReference>
<dbReference type="SMR" id="Q9QYK3"/>
<dbReference type="BioGRID" id="248641">
    <property type="interactions" value="1"/>
</dbReference>
<dbReference type="FunCoup" id="Q9QYK3">
    <property type="interactions" value="1895"/>
</dbReference>
<dbReference type="STRING" id="10116.ENSRNOP00000000794"/>
<dbReference type="PhosphoSitePlus" id="Q9QYK3"/>
<dbReference type="PaxDb" id="10116-ENSRNOP00000000794"/>
<dbReference type="GeneID" id="58839"/>
<dbReference type="KEGG" id="rno:58839"/>
<dbReference type="UCSC" id="RGD:61937">
    <property type="organism name" value="rat"/>
</dbReference>
<dbReference type="AGR" id="RGD:2322973"/>
<dbReference type="AGR" id="RGD:61937"/>
<dbReference type="CTD" id="29982"/>
<dbReference type="RGD" id="61937">
    <property type="gene designation" value="Nrbf2"/>
</dbReference>
<dbReference type="eggNOG" id="ENOG502SGH4">
    <property type="taxonomic scope" value="Eukaryota"/>
</dbReference>
<dbReference type="InParanoid" id="Q9QYK3"/>
<dbReference type="PhylomeDB" id="Q9QYK3"/>
<dbReference type="Reactome" id="R-RNO-383280">
    <property type="pathway name" value="Nuclear Receptor transcription pathway"/>
</dbReference>
<dbReference type="PRO" id="PR:Q9QYK3"/>
<dbReference type="Proteomes" id="UP000002494">
    <property type="component" value="Unplaced"/>
</dbReference>
<dbReference type="GO" id="GO:0005776">
    <property type="term" value="C:autophagosome"/>
    <property type="evidence" value="ECO:0007669"/>
    <property type="project" value="UniProtKB-SubCell"/>
</dbReference>
<dbReference type="GO" id="GO:0031410">
    <property type="term" value="C:cytoplasmic vesicle"/>
    <property type="evidence" value="ECO:0007669"/>
    <property type="project" value="UniProtKB-KW"/>
</dbReference>
<dbReference type="GO" id="GO:0005634">
    <property type="term" value="C:nucleus"/>
    <property type="evidence" value="ECO:0007669"/>
    <property type="project" value="UniProtKB-SubCell"/>
</dbReference>
<dbReference type="GO" id="GO:0035032">
    <property type="term" value="C:phosphatidylinositol 3-kinase complex, class III"/>
    <property type="evidence" value="ECO:0000266"/>
    <property type="project" value="RGD"/>
</dbReference>
<dbReference type="GO" id="GO:0016922">
    <property type="term" value="F:nuclear receptor binding"/>
    <property type="evidence" value="ECO:0000314"/>
    <property type="project" value="RGD"/>
</dbReference>
<dbReference type="GO" id="GO:0006914">
    <property type="term" value="P:autophagy"/>
    <property type="evidence" value="ECO:0000266"/>
    <property type="project" value="RGD"/>
</dbReference>
<dbReference type="GO" id="GO:0045893">
    <property type="term" value="P:positive regulation of DNA-templated transcription"/>
    <property type="evidence" value="ECO:0000314"/>
    <property type="project" value="RGD"/>
</dbReference>
<dbReference type="GO" id="GO:0034976">
    <property type="term" value="P:response to endoplasmic reticulum stress"/>
    <property type="evidence" value="ECO:0000266"/>
    <property type="project" value="RGD"/>
</dbReference>
<dbReference type="FunFam" id="1.20.58.80:FF:000018">
    <property type="entry name" value="nuclear receptor-binding factor 2 isoform X1"/>
    <property type="match status" value="1"/>
</dbReference>
<dbReference type="Gene3D" id="1.20.58.80">
    <property type="entry name" value="Phosphotransferase system, lactose/cellobiose-type IIA subunit"/>
    <property type="match status" value="1"/>
</dbReference>
<dbReference type="InterPro" id="IPR039679">
    <property type="entry name" value="NRBF2"/>
</dbReference>
<dbReference type="InterPro" id="IPR015056">
    <property type="entry name" value="NRBF2_C"/>
</dbReference>
<dbReference type="InterPro" id="IPR033393">
    <property type="entry name" value="NRBF2_MIT"/>
</dbReference>
<dbReference type="PANTHER" id="PTHR14964">
    <property type="entry name" value="NUCLEAR RECEPTOR BINDING FACTOR 2"/>
    <property type="match status" value="1"/>
</dbReference>
<dbReference type="PANTHER" id="PTHR14964:SF2">
    <property type="entry name" value="NUCLEAR RECEPTOR-BINDING FACTOR 2"/>
    <property type="match status" value="1"/>
</dbReference>
<dbReference type="Pfam" id="PF08961">
    <property type="entry name" value="NRBF2"/>
    <property type="match status" value="1"/>
</dbReference>
<dbReference type="Pfam" id="PF17169">
    <property type="entry name" value="NRBF2_MIT"/>
    <property type="match status" value="1"/>
</dbReference>
<dbReference type="SUPFAM" id="SSF140361">
    <property type="entry name" value="MIT domain-like"/>
    <property type="match status" value="1"/>
</dbReference>
<reference key="1">
    <citation type="journal article" date="2000" name="Biochim. Biophys. Acta">
        <title>Nuclear receptor binding factor-2 (NRBF-2), a possible gene activator protein interacting with nuclear hormone receptors.</title>
        <authorList>
            <person name="Yasumo H."/>
            <person name="Masuda N."/>
            <person name="Furusawa T."/>
            <person name="Tsukamoto T."/>
            <person name="Sadano H."/>
            <person name="Osumi T."/>
        </authorList>
    </citation>
    <scope>NUCLEOTIDE SEQUENCE [MRNA]</scope>
    <scope>FUNCTION</scope>
    <scope>SUBCELLULAR LOCATION</scope>
    <scope>INTERACTION WITH PPARA; THRB; RARA AND RXRA</scope>
    <scope>TISSUE SPECIFICITY</scope>
    <source>
        <tissue>Liver</tissue>
    </source>
</reference>
<reference key="2">
    <citation type="journal article" date="2008" name="Mol. Cell. Neurosci.">
        <title>Nuclear receptor binding protein 2 is induced during neural progenitor differentiation and affects cell survival.</title>
        <authorList>
            <person name="Larsson J."/>
            <person name="Forsberg M."/>
            <person name="Brannvall K."/>
            <person name="Zhang X.Q."/>
            <person name="Enarsson M."/>
            <person name="Hedborg F."/>
            <person name="Forsberg-Nilsson K."/>
        </authorList>
    </citation>
    <scope>DEVELOPMENTAL STAGE</scope>
</reference>
<gene>
    <name type="primary">Nrbf2</name>
</gene>
<sequence length="287" mass="32558">MEVMEGPLNLAHQQSRRADRLLAAGKYEEAISCHKKATAYLSEAMKLTQSEQAHLSLELQRDSHMKQLLLIQERWKRAKREERLKAQQSTDRDGVPHLQASHRPSEDSEGQSPLLSQTYIPSTEKRLPEEQGVFDRDPDTLLFLLQQKNEPSEPCIGSKAPKDDKTIIEEQATKIAELKRHVEFLVAENERLRKENKQLKAEKARLLKGPAEKELDVDADFVEKSELWGLPPHSDTATASSTWQKFAANTGKAKDIPIPNLPPLDFPSPELPLMELSEDILKGFMND</sequence>
<feature type="chain" id="PRO_0000235819" description="Nuclear receptor-binding factor 2">
    <location>
        <begin position="1"/>
        <end position="287"/>
    </location>
</feature>
<feature type="region of interest" description="Disordered" evidence="5">
    <location>
        <begin position="81"/>
        <end position="114"/>
    </location>
</feature>
<feature type="coiled-coil region" evidence="4">
    <location>
        <begin position="168"/>
        <end position="209"/>
    </location>
</feature>
<feature type="short sequence motif" description="Nuclear receptor interaction motif" evidence="1">
    <location>
        <begin position="141"/>
        <end position="145"/>
    </location>
</feature>
<feature type="compositionally biased region" description="Basic and acidic residues" evidence="5">
    <location>
        <begin position="81"/>
        <end position="95"/>
    </location>
</feature>
<feature type="modified residue" description="Phosphoserine" evidence="3">
    <location>
        <position position="112"/>
    </location>
</feature>
<feature type="modified residue" description="Phosphoserine" evidence="3">
    <location>
        <position position="268"/>
    </location>
</feature>
<keyword id="KW-0072">Autophagy</keyword>
<keyword id="KW-0175">Coiled coil</keyword>
<keyword id="KW-0963">Cytoplasm</keyword>
<keyword id="KW-0968">Cytoplasmic vesicle</keyword>
<keyword id="KW-0539">Nucleus</keyword>
<keyword id="KW-0597">Phosphoprotein</keyword>
<keyword id="KW-1185">Reference proteome</keyword>
<keyword id="KW-0804">Transcription</keyword>
<keyword id="KW-0805">Transcription regulation</keyword>
<comment type="function">
    <text evidence="6">May modulate transcriptional activation by target nuclear receptors. Can act as transcriptional activator (in vitro).</text>
</comment>
<comment type="function">
    <text evidence="2 3">Involved in starvation-induced autophagy probably by its association with PI3K complex I (PI3KC3-C1). However, effects has been described variably. Involved in the induction of starvation-induced autophagy. Stabilizes PI3KC3-C1 assembly and enhances ATG14-linked lipid kinase activity of PIK3C3. Proposed to negatively regulate basal and starvation-induced autophagy and to inhibit PIK3C3 activity by modulating interactions in PI3KC3-C1. May be involved in autophagosome biogenesis. May play a role in neural progenitor cell survival during differentiation (By similarity).</text>
</comment>
<comment type="subunit">
    <text evidence="2 3 6">Interacts with PPARD and PPARG (By similarity). Interacts with SCOC (By similarity). Interacts with PPARA. Interacts with THRB, RARA, RARG and RXRA in the presence of bound ligand. Associates with the PI3K complex I (PI3KC3-C1); the direct binding partner in the complex is reported variably as PIK3R4 or ATG14 (By similarity).</text>
</comment>
<comment type="subcellular location">
    <subcellularLocation>
        <location evidence="6">Nucleus</location>
    </subcellularLocation>
    <subcellularLocation>
        <location evidence="6">Cytoplasm</location>
    </subcellularLocation>
    <subcellularLocation>
        <location evidence="8">Cytoplasmic vesicle</location>
        <location evidence="8">Autophagosome</location>
    </subcellularLocation>
</comment>
<comment type="tissue specificity">
    <text evidence="6">Detected in spleen, lung, muscle, liver, kidney, heart, testis and brain.</text>
</comment>
<comment type="developmental stage">
    <text evidence="7">Expressed at 14.5 dpc in cerebral cortex; expression increases over time in cultured neural stem/progenitor cells.</text>
</comment>
<comment type="similarity">
    <text evidence="8">Belongs to the NRBF family.</text>
</comment>
<evidence type="ECO:0000250" key="1"/>
<evidence type="ECO:0000250" key="2">
    <source>
        <dbReference type="UniProtKB" id="Q8VCQ3"/>
    </source>
</evidence>
<evidence type="ECO:0000250" key="3">
    <source>
        <dbReference type="UniProtKB" id="Q96F24"/>
    </source>
</evidence>
<evidence type="ECO:0000255" key="4"/>
<evidence type="ECO:0000256" key="5">
    <source>
        <dbReference type="SAM" id="MobiDB-lite"/>
    </source>
</evidence>
<evidence type="ECO:0000269" key="6">
    <source>
    </source>
</evidence>
<evidence type="ECO:0000269" key="7">
    <source>
    </source>
</evidence>
<evidence type="ECO:0000305" key="8"/>
<name>NRBF2_RAT</name>
<protein>
    <recommendedName>
        <fullName>Nuclear receptor-binding factor 2</fullName>
        <shortName>NRBF-2</shortName>
    </recommendedName>
</protein>
<accession>Q9QYK3</accession>